<name>TIG_SYNC1</name>
<feature type="chain" id="PRO_0000256586" description="Trigger factor">
    <location>
        <begin position="1"/>
        <end position="439"/>
    </location>
</feature>
<feature type="domain" description="PPIase FKBP-type" evidence="1">
    <location>
        <begin position="163"/>
        <end position="248"/>
    </location>
</feature>
<gene>
    <name evidence="1" type="primary">tig</name>
    <name type="ordered locus">Pcar_1690</name>
</gene>
<keyword id="KW-0131">Cell cycle</keyword>
<keyword id="KW-0132">Cell division</keyword>
<keyword id="KW-0143">Chaperone</keyword>
<keyword id="KW-0963">Cytoplasm</keyword>
<keyword id="KW-0413">Isomerase</keyword>
<keyword id="KW-1185">Reference proteome</keyword>
<keyword id="KW-0697">Rotamase</keyword>
<accession>Q3A3X4</accession>
<proteinExistence type="inferred from homology"/>
<reference key="1">
    <citation type="submission" date="2005-10" db="EMBL/GenBank/DDBJ databases">
        <title>Complete sequence of Pelobacter carbinolicus DSM 2380.</title>
        <authorList>
            <person name="Copeland A."/>
            <person name="Lucas S."/>
            <person name="Lapidus A."/>
            <person name="Barry K."/>
            <person name="Detter J.C."/>
            <person name="Glavina T."/>
            <person name="Hammon N."/>
            <person name="Israni S."/>
            <person name="Pitluck S."/>
            <person name="Chertkov O."/>
            <person name="Schmutz J."/>
            <person name="Larimer F."/>
            <person name="Land M."/>
            <person name="Kyrpides N."/>
            <person name="Ivanova N."/>
            <person name="Richardson P."/>
        </authorList>
    </citation>
    <scope>NUCLEOTIDE SEQUENCE [LARGE SCALE GENOMIC DNA]</scope>
    <source>
        <strain>DSM 2380 / NBRC 103641 / GraBd1</strain>
    </source>
</reference>
<sequence length="439" mass="49446">MNVKVEDISSIKKKLSFEISVEAVDTEFSNEYKKLSKTAKIPGFRKGKVPRSVLERQYAGHVEGQVFERLVNETFFKALVDEKINAVSAPEVVDNGPLKPGQAFTYEAEVEVRPDVEAKDYIGLDLKKENFAVEDQDVEDRLQDMLKSRAKVEVSEREVAQAGDIAVIDFEGFVDGEAFAGGKAEGHELELGSNSFIPGFEDQVVGMECGQDKDIEVAFPEDYGNEELAGKPAVFKVRLNQIKERVLPALDEEFAKEAGLESVEDLKIKIRESIEGQERDRIEKDFRERMTDALIEANEFEVPEGMIDSQIDYMLKNLQNRMQAQGMRLEDMGINAESFRQIYREVAAKQVKASLILEAIALQENLKVEEDEIKDKLEEIVETSGAPKEAVMNYYSNDESRRGLVSQMAEEKVVAFLTGKAKIEMVDKEALENAKMTEE</sequence>
<evidence type="ECO:0000255" key="1">
    <source>
        <dbReference type="HAMAP-Rule" id="MF_00303"/>
    </source>
</evidence>
<protein>
    <recommendedName>
        <fullName evidence="1">Trigger factor</fullName>
        <shortName evidence="1">TF</shortName>
        <ecNumber evidence="1">5.2.1.8</ecNumber>
    </recommendedName>
    <alternativeName>
        <fullName evidence="1">PPIase</fullName>
    </alternativeName>
</protein>
<comment type="function">
    <text evidence="1">Involved in protein export. Acts as a chaperone by maintaining the newly synthesized protein in an open conformation. Functions as a peptidyl-prolyl cis-trans isomerase.</text>
</comment>
<comment type="catalytic activity">
    <reaction evidence="1">
        <text>[protein]-peptidylproline (omega=180) = [protein]-peptidylproline (omega=0)</text>
        <dbReference type="Rhea" id="RHEA:16237"/>
        <dbReference type="Rhea" id="RHEA-COMP:10747"/>
        <dbReference type="Rhea" id="RHEA-COMP:10748"/>
        <dbReference type="ChEBI" id="CHEBI:83833"/>
        <dbReference type="ChEBI" id="CHEBI:83834"/>
        <dbReference type="EC" id="5.2.1.8"/>
    </reaction>
</comment>
<comment type="subcellular location">
    <subcellularLocation>
        <location>Cytoplasm</location>
    </subcellularLocation>
    <text evidence="1">About half TF is bound to the ribosome near the polypeptide exit tunnel while the other half is free in the cytoplasm.</text>
</comment>
<comment type="domain">
    <text evidence="1">Consists of 3 domains; the N-terminus binds the ribosome, the middle domain has PPIase activity, while the C-terminus has intrinsic chaperone activity on its own.</text>
</comment>
<comment type="similarity">
    <text evidence="1">Belongs to the FKBP-type PPIase family. Tig subfamily.</text>
</comment>
<organism>
    <name type="scientific">Syntrophotalea carbinolica (strain DSM 2380 / NBRC 103641 / GraBd1)</name>
    <name type="common">Pelobacter carbinolicus</name>
    <dbReference type="NCBI Taxonomy" id="338963"/>
    <lineage>
        <taxon>Bacteria</taxon>
        <taxon>Pseudomonadati</taxon>
        <taxon>Thermodesulfobacteriota</taxon>
        <taxon>Desulfuromonadia</taxon>
        <taxon>Desulfuromonadales</taxon>
        <taxon>Syntrophotaleaceae</taxon>
        <taxon>Syntrophotalea</taxon>
    </lineage>
</organism>
<dbReference type="EC" id="5.2.1.8" evidence="1"/>
<dbReference type="EMBL" id="CP000142">
    <property type="protein sequence ID" value="ABA88933.1"/>
    <property type="molecule type" value="Genomic_DNA"/>
</dbReference>
<dbReference type="RefSeq" id="WP_011341424.1">
    <property type="nucleotide sequence ID" value="NC_007498.2"/>
</dbReference>
<dbReference type="SMR" id="Q3A3X4"/>
<dbReference type="STRING" id="338963.Pcar_1690"/>
<dbReference type="KEGG" id="pca:Pcar_1690"/>
<dbReference type="eggNOG" id="COG0544">
    <property type="taxonomic scope" value="Bacteria"/>
</dbReference>
<dbReference type="HOGENOM" id="CLU_033058_3_2_7"/>
<dbReference type="OrthoDB" id="9767721at2"/>
<dbReference type="Proteomes" id="UP000002534">
    <property type="component" value="Chromosome"/>
</dbReference>
<dbReference type="GO" id="GO:0005737">
    <property type="term" value="C:cytoplasm"/>
    <property type="evidence" value="ECO:0007669"/>
    <property type="project" value="UniProtKB-SubCell"/>
</dbReference>
<dbReference type="GO" id="GO:0003755">
    <property type="term" value="F:peptidyl-prolyl cis-trans isomerase activity"/>
    <property type="evidence" value="ECO:0007669"/>
    <property type="project" value="UniProtKB-UniRule"/>
</dbReference>
<dbReference type="GO" id="GO:0044183">
    <property type="term" value="F:protein folding chaperone"/>
    <property type="evidence" value="ECO:0007669"/>
    <property type="project" value="TreeGrafter"/>
</dbReference>
<dbReference type="GO" id="GO:0043022">
    <property type="term" value="F:ribosome binding"/>
    <property type="evidence" value="ECO:0007669"/>
    <property type="project" value="TreeGrafter"/>
</dbReference>
<dbReference type="GO" id="GO:0051083">
    <property type="term" value="P:'de novo' cotranslational protein folding"/>
    <property type="evidence" value="ECO:0007669"/>
    <property type="project" value="TreeGrafter"/>
</dbReference>
<dbReference type="GO" id="GO:0051301">
    <property type="term" value="P:cell division"/>
    <property type="evidence" value="ECO:0007669"/>
    <property type="project" value="UniProtKB-KW"/>
</dbReference>
<dbReference type="GO" id="GO:0061077">
    <property type="term" value="P:chaperone-mediated protein folding"/>
    <property type="evidence" value="ECO:0007669"/>
    <property type="project" value="TreeGrafter"/>
</dbReference>
<dbReference type="GO" id="GO:0015031">
    <property type="term" value="P:protein transport"/>
    <property type="evidence" value="ECO:0007669"/>
    <property type="project" value="UniProtKB-UniRule"/>
</dbReference>
<dbReference type="GO" id="GO:0043335">
    <property type="term" value="P:protein unfolding"/>
    <property type="evidence" value="ECO:0007669"/>
    <property type="project" value="TreeGrafter"/>
</dbReference>
<dbReference type="FunFam" id="3.10.50.40:FF:000001">
    <property type="entry name" value="Trigger factor"/>
    <property type="match status" value="1"/>
</dbReference>
<dbReference type="Gene3D" id="3.10.50.40">
    <property type="match status" value="1"/>
</dbReference>
<dbReference type="Gene3D" id="3.30.70.1050">
    <property type="entry name" value="Trigger factor ribosome-binding domain"/>
    <property type="match status" value="1"/>
</dbReference>
<dbReference type="Gene3D" id="1.10.3120.10">
    <property type="entry name" value="Trigger factor, C-terminal domain"/>
    <property type="match status" value="1"/>
</dbReference>
<dbReference type="HAMAP" id="MF_00303">
    <property type="entry name" value="Trigger_factor_Tig"/>
    <property type="match status" value="1"/>
</dbReference>
<dbReference type="InterPro" id="IPR046357">
    <property type="entry name" value="PPIase_dom_sf"/>
</dbReference>
<dbReference type="InterPro" id="IPR001179">
    <property type="entry name" value="PPIase_FKBP_dom"/>
</dbReference>
<dbReference type="InterPro" id="IPR005215">
    <property type="entry name" value="Trig_fac"/>
</dbReference>
<dbReference type="InterPro" id="IPR008880">
    <property type="entry name" value="Trigger_fac_C"/>
</dbReference>
<dbReference type="InterPro" id="IPR037041">
    <property type="entry name" value="Trigger_fac_C_sf"/>
</dbReference>
<dbReference type="InterPro" id="IPR008881">
    <property type="entry name" value="Trigger_fac_ribosome-bd_bac"/>
</dbReference>
<dbReference type="InterPro" id="IPR036611">
    <property type="entry name" value="Trigger_fac_ribosome-bd_sf"/>
</dbReference>
<dbReference type="InterPro" id="IPR027304">
    <property type="entry name" value="Trigger_fact/SurA_dom_sf"/>
</dbReference>
<dbReference type="NCBIfam" id="TIGR00115">
    <property type="entry name" value="tig"/>
    <property type="match status" value="1"/>
</dbReference>
<dbReference type="PANTHER" id="PTHR30560">
    <property type="entry name" value="TRIGGER FACTOR CHAPERONE AND PEPTIDYL-PROLYL CIS/TRANS ISOMERASE"/>
    <property type="match status" value="1"/>
</dbReference>
<dbReference type="PANTHER" id="PTHR30560:SF3">
    <property type="entry name" value="TRIGGER FACTOR-LIKE PROTEIN TIG, CHLOROPLASTIC"/>
    <property type="match status" value="1"/>
</dbReference>
<dbReference type="Pfam" id="PF00254">
    <property type="entry name" value="FKBP_C"/>
    <property type="match status" value="1"/>
</dbReference>
<dbReference type="Pfam" id="PF05698">
    <property type="entry name" value="Trigger_C"/>
    <property type="match status" value="1"/>
</dbReference>
<dbReference type="Pfam" id="PF05697">
    <property type="entry name" value="Trigger_N"/>
    <property type="match status" value="1"/>
</dbReference>
<dbReference type="PIRSF" id="PIRSF003095">
    <property type="entry name" value="Trigger_factor"/>
    <property type="match status" value="1"/>
</dbReference>
<dbReference type="SUPFAM" id="SSF54534">
    <property type="entry name" value="FKBP-like"/>
    <property type="match status" value="1"/>
</dbReference>
<dbReference type="SUPFAM" id="SSF109998">
    <property type="entry name" value="Triger factor/SurA peptide-binding domain-like"/>
    <property type="match status" value="1"/>
</dbReference>
<dbReference type="SUPFAM" id="SSF102735">
    <property type="entry name" value="Trigger factor ribosome-binding domain"/>
    <property type="match status" value="1"/>
</dbReference>
<dbReference type="PROSITE" id="PS50059">
    <property type="entry name" value="FKBP_PPIASE"/>
    <property type="match status" value="1"/>
</dbReference>